<comment type="function">
    <text evidence="3">Component of the cytochrome c oxidase, the last enzyme in the mitochondrial electron transport chain which drives oxidative phosphorylation. The respiratory chain contains 3 multisubunit complexes succinate dehydrogenase (complex II, CII), ubiquinol-cytochrome c oxidoreductase (cytochrome b-c1 complex, complex III, CIII) and cytochrome c oxidase (complex IV, CIV), that cooperate to transfer electrons derived from NADH and succinate to molecular oxygen, creating an electrochemical gradient over the inner membrane that drives transmembrane transport and the ATP synthase. Cytochrome c oxidase is the component of the respiratory chain that catalyzes the reduction of oxygen to water. Electrons originating from reduced cytochrome c in the intermembrane space (IMS) are transferred via the dinuclear copper A center (CU(A)) of subunit 2 and heme A of subunit 1 to the active site in subunit 1, a binuclear center (BNC) formed by heme A3 and copper B (CU(B)). The BNC reduces molecular oxygen to 2 water molecules using 4 electrons from cytochrome c in the IMS and 4 protons from the mitochondrial matrix.</text>
</comment>
<comment type="catalytic activity">
    <reaction evidence="3">
        <text>4 Fe(II)-[cytochrome c] + O2 + 8 H(+)(in) = 4 Fe(III)-[cytochrome c] + 2 H2O + 4 H(+)(out)</text>
        <dbReference type="Rhea" id="RHEA:11436"/>
        <dbReference type="Rhea" id="RHEA-COMP:10350"/>
        <dbReference type="Rhea" id="RHEA-COMP:14399"/>
        <dbReference type="ChEBI" id="CHEBI:15377"/>
        <dbReference type="ChEBI" id="CHEBI:15378"/>
        <dbReference type="ChEBI" id="CHEBI:15379"/>
        <dbReference type="ChEBI" id="CHEBI:29033"/>
        <dbReference type="ChEBI" id="CHEBI:29034"/>
        <dbReference type="EC" id="7.1.1.9"/>
    </reaction>
    <physiologicalReaction direction="left-to-right" evidence="3">
        <dbReference type="Rhea" id="RHEA:11437"/>
    </physiologicalReaction>
</comment>
<comment type="cofactor">
    <cofactor evidence="2">
        <name>heme</name>
        <dbReference type="ChEBI" id="CHEBI:30413"/>
    </cofactor>
    <text evidence="2">Binds 2 heme A groups non-covalently per subunit.</text>
</comment>
<comment type="cofactor">
    <cofactor evidence="2">
        <name>Cu cation</name>
        <dbReference type="ChEBI" id="CHEBI:23378"/>
    </cofactor>
    <text evidence="2">Binds a copper B center.</text>
</comment>
<comment type="pathway">
    <text evidence="3">Energy metabolism; oxidative phosphorylation.</text>
</comment>
<comment type="subunit">
    <text evidence="1 2">Component of the cytochrome c oxidase (complex IV, CIV), a multisubunit enzyme composed of 14 subunits. The complex is composed of a catalytic core of 3 subunits MT-CO1, MT-CO2 and MT-CO3, encoded in the mitochondrial DNA, and 11 supernumerary subunits COX4I, COX5A, COX5B, COX6A, COX6B, COX6C, COX7A, COX7B, COX7C, COX8 and NDUFA4, which are encoded in the nuclear genome. The complex exists as a monomer or a dimer and forms supercomplexes (SCs) in the inner mitochondrial membrane with NADH-ubiquinone oxidoreductase (complex I, CI) and ubiquinol-cytochrome c oxidoreductase (cytochrome b-c1 complex, complex III, CIII), resulting in different assemblies (supercomplex SCI(1)III(2)IV(1) and megacomplex MCI(2)III(2)IV(2)) (By similarity). As a newly synthesized protein, rapidly incorporates into a multi-subunit assembly intermediate in the inner membrane, called MITRAC (mitochondrial translation regulation assembly intermediate of cytochrome c oxidase) complex, whose core components are COA3/MITRAC12 and COX14. Within the MITRAC complex, interacts with COA3 and with SMIM20/MITRAC7; the interaction with SMIM20 stabilizes the newly synthesized MT-CO1 and prevents its premature turnover. Interacts with TMEM177 in a COX20-dependent manner (By similarity).</text>
</comment>
<comment type="subcellular location">
    <subcellularLocation>
        <location evidence="2">Mitochondrion inner membrane</location>
        <topology evidence="2">Multi-pass membrane protein</topology>
    </subcellularLocation>
</comment>
<comment type="similarity">
    <text evidence="4">Belongs to the heme-copper respiratory oxidase family.</text>
</comment>
<feature type="chain" id="PRO_0000183315" description="Cytochrome c oxidase subunit 1">
    <location>
        <begin position="1"/>
        <end position="514"/>
    </location>
</feature>
<feature type="topological domain" description="Mitochondrial matrix" evidence="2">
    <location>
        <begin position="1"/>
        <end position="11"/>
    </location>
</feature>
<feature type="transmembrane region" description="Helical; Name=I" evidence="2">
    <location>
        <begin position="12"/>
        <end position="40"/>
    </location>
</feature>
<feature type="topological domain" description="Mitochondrial intermembrane" evidence="2">
    <location>
        <begin position="41"/>
        <end position="50"/>
    </location>
</feature>
<feature type="transmembrane region" description="Helical; Name=II" evidence="2">
    <location>
        <begin position="51"/>
        <end position="86"/>
    </location>
</feature>
<feature type="topological domain" description="Mitochondrial matrix" evidence="2">
    <location>
        <begin position="87"/>
        <end position="94"/>
    </location>
</feature>
<feature type="transmembrane region" description="Helical; Name=III" evidence="2">
    <location>
        <begin position="95"/>
        <end position="117"/>
    </location>
</feature>
<feature type="topological domain" description="Mitochondrial intermembrane" evidence="2">
    <location>
        <begin position="118"/>
        <end position="140"/>
    </location>
</feature>
<feature type="transmembrane region" description="Helical; Name=IV" evidence="2">
    <location>
        <begin position="141"/>
        <end position="170"/>
    </location>
</feature>
<feature type="topological domain" description="Mitochondrial matrix" evidence="2">
    <location>
        <begin position="171"/>
        <end position="182"/>
    </location>
</feature>
<feature type="transmembrane region" description="Helical; Name=V" evidence="2">
    <location>
        <begin position="183"/>
        <end position="212"/>
    </location>
</feature>
<feature type="topological domain" description="Mitochondrial intermembrane" evidence="2">
    <location>
        <begin position="213"/>
        <end position="227"/>
    </location>
</feature>
<feature type="transmembrane region" description="Helical; Name=VI" evidence="2">
    <location>
        <begin position="228"/>
        <end position="261"/>
    </location>
</feature>
<feature type="topological domain" description="Mitochondrial matrix" evidence="2">
    <location>
        <begin position="262"/>
        <end position="269"/>
    </location>
</feature>
<feature type="transmembrane region" description="Helical; Name=VII" evidence="2">
    <location>
        <begin position="270"/>
        <end position="286"/>
    </location>
</feature>
<feature type="topological domain" description="Mitochondrial intermembrane" evidence="2">
    <location>
        <begin position="287"/>
        <end position="298"/>
    </location>
</feature>
<feature type="transmembrane region" description="Helical; Name=VIII" evidence="2">
    <location>
        <begin position="299"/>
        <end position="327"/>
    </location>
</feature>
<feature type="topological domain" description="Mitochondrial matrix" evidence="2">
    <location>
        <begin position="328"/>
        <end position="335"/>
    </location>
</feature>
<feature type="transmembrane region" description="Helical; Name=IX" evidence="2">
    <location>
        <begin position="336"/>
        <end position="357"/>
    </location>
</feature>
<feature type="topological domain" description="Mitochondrial intermembrane" evidence="2">
    <location>
        <begin position="358"/>
        <end position="370"/>
    </location>
</feature>
<feature type="transmembrane region" description="Helical; Name=X" evidence="2">
    <location>
        <begin position="371"/>
        <end position="400"/>
    </location>
</feature>
<feature type="topological domain" description="Mitochondrial matrix" evidence="2">
    <location>
        <begin position="401"/>
        <end position="406"/>
    </location>
</feature>
<feature type="transmembrane region" description="Helical; Name=XI" evidence="2">
    <location>
        <begin position="407"/>
        <end position="433"/>
    </location>
</feature>
<feature type="topological domain" description="Mitochondrial intermembrane" evidence="2">
    <location>
        <begin position="434"/>
        <end position="446"/>
    </location>
</feature>
<feature type="transmembrane region" description="Helical; Name=XII" evidence="2">
    <location>
        <begin position="447"/>
        <end position="478"/>
    </location>
</feature>
<feature type="topological domain" description="Mitochondrial matrix" evidence="2">
    <location>
        <begin position="479"/>
        <end position="514"/>
    </location>
</feature>
<feature type="binding site" evidence="2">
    <location>
        <position position="40"/>
    </location>
    <ligand>
        <name>Na(+)</name>
        <dbReference type="ChEBI" id="CHEBI:29101"/>
    </ligand>
</feature>
<feature type="binding site" evidence="2">
    <location>
        <position position="45"/>
    </location>
    <ligand>
        <name>Na(+)</name>
        <dbReference type="ChEBI" id="CHEBI:29101"/>
    </ligand>
</feature>
<feature type="binding site" description="axial binding residue" evidence="2">
    <location>
        <position position="61"/>
    </location>
    <ligand>
        <name>Fe(II)-heme a</name>
        <dbReference type="ChEBI" id="CHEBI:61715"/>
        <note>low-spin</note>
    </ligand>
    <ligandPart>
        <name>Fe</name>
        <dbReference type="ChEBI" id="CHEBI:18248"/>
    </ligandPart>
</feature>
<feature type="binding site" evidence="2">
    <location>
        <position position="240"/>
    </location>
    <ligand>
        <name>Cu cation</name>
        <dbReference type="ChEBI" id="CHEBI:23378"/>
        <label>B</label>
    </ligand>
</feature>
<feature type="binding site" evidence="2">
    <location>
        <position position="244"/>
    </location>
    <ligand>
        <name>O2</name>
        <dbReference type="ChEBI" id="CHEBI:15379"/>
    </ligand>
</feature>
<feature type="binding site" evidence="2">
    <location>
        <position position="290"/>
    </location>
    <ligand>
        <name>Cu cation</name>
        <dbReference type="ChEBI" id="CHEBI:23378"/>
        <label>B</label>
    </ligand>
</feature>
<feature type="binding site" evidence="2">
    <location>
        <position position="291"/>
    </location>
    <ligand>
        <name>Cu cation</name>
        <dbReference type="ChEBI" id="CHEBI:23378"/>
        <label>B</label>
    </ligand>
</feature>
<feature type="binding site" evidence="2">
    <location>
        <position position="368"/>
    </location>
    <ligand>
        <name>Mg(2+)</name>
        <dbReference type="ChEBI" id="CHEBI:18420"/>
        <note>ligand shared with MT-CO2</note>
    </ligand>
</feature>
<feature type="binding site" evidence="2">
    <location>
        <position position="369"/>
    </location>
    <ligand>
        <name>Mg(2+)</name>
        <dbReference type="ChEBI" id="CHEBI:18420"/>
        <note>ligand shared with MT-CO2</note>
    </ligand>
</feature>
<feature type="binding site" description="axial binding residue" evidence="2">
    <location>
        <position position="376"/>
    </location>
    <ligand>
        <name>heme a3</name>
        <dbReference type="ChEBI" id="CHEBI:83282"/>
        <note>high-spin</note>
    </ligand>
    <ligandPart>
        <name>Fe</name>
        <dbReference type="ChEBI" id="CHEBI:18248"/>
    </ligandPart>
</feature>
<feature type="binding site" description="axial binding residue" evidence="2">
    <location>
        <position position="378"/>
    </location>
    <ligand>
        <name>Fe(II)-heme a</name>
        <dbReference type="ChEBI" id="CHEBI:61715"/>
        <note>low-spin</note>
    </ligand>
    <ligandPart>
        <name>Fe</name>
        <dbReference type="ChEBI" id="CHEBI:18248"/>
    </ligandPart>
</feature>
<feature type="binding site" evidence="2">
    <location>
        <position position="441"/>
    </location>
    <ligand>
        <name>Na(+)</name>
        <dbReference type="ChEBI" id="CHEBI:29101"/>
    </ligand>
</feature>
<feature type="cross-link" description="1'-histidyl-3'-tyrosine (His-Tyr)" evidence="2">
    <location>
        <begin position="240"/>
        <end position="244"/>
    </location>
</feature>
<protein>
    <recommendedName>
        <fullName>Cytochrome c oxidase subunit 1</fullName>
        <ecNumber>7.1.1.9</ecNumber>
    </recommendedName>
    <alternativeName>
        <fullName>Cytochrome c oxidase polypeptide I</fullName>
    </alternativeName>
</protein>
<proteinExistence type="inferred from homology"/>
<keyword id="KW-0106">Calcium</keyword>
<keyword id="KW-0186">Copper</keyword>
<keyword id="KW-0249">Electron transport</keyword>
<keyword id="KW-0349">Heme</keyword>
<keyword id="KW-0408">Iron</keyword>
<keyword id="KW-0460">Magnesium</keyword>
<keyword id="KW-0472">Membrane</keyword>
<keyword id="KW-0479">Metal-binding</keyword>
<keyword id="KW-0496">Mitochondrion</keyword>
<keyword id="KW-0999">Mitochondrion inner membrane</keyword>
<keyword id="KW-0679">Respiratory chain</keyword>
<keyword id="KW-0915">Sodium</keyword>
<keyword id="KW-1278">Translocase</keyword>
<keyword id="KW-0812">Transmembrane</keyword>
<keyword id="KW-1133">Transmembrane helix</keyword>
<keyword id="KW-0813">Transport</keyword>
<accession>O99041</accession>
<name>COX1_COLPO</name>
<evidence type="ECO:0000250" key="1">
    <source>
        <dbReference type="UniProtKB" id="P00395"/>
    </source>
</evidence>
<evidence type="ECO:0000250" key="2">
    <source>
        <dbReference type="UniProtKB" id="P00396"/>
    </source>
</evidence>
<evidence type="ECO:0000250" key="3">
    <source>
        <dbReference type="UniProtKB" id="P00401"/>
    </source>
</evidence>
<evidence type="ECO:0000305" key="4"/>
<organism>
    <name type="scientific">Colobus polykomos</name>
    <name type="common">Western black-and-white colobus monkey</name>
    <dbReference type="NCBI Taxonomy" id="9572"/>
    <lineage>
        <taxon>Eukaryota</taxon>
        <taxon>Metazoa</taxon>
        <taxon>Chordata</taxon>
        <taxon>Craniata</taxon>
        <taxon>Vertebrata</taxon>
        <taxon>Euteleostomi</taxon>
        <taxon>Mammalia</taxon>
        <taxon>Eutheria</taxon>
        <taxon>Euarchontoglires</taxon>
        <taxon>Primates</taxon>
        <taxon>Haplorrhini</taxon>
        <taxon>Catarrhini</taxon>
        <taxon>Cercopithecidae</taxon>
        <taxon>Colobinae</taxon>
        <taxon>Colobus</taxon>
    </lineage>
</organism>
<gene>
    <name type="primary">MT-CO1</name>
    <name type="synonym">COI</name>
    <name type="synonym">COXI</name>
    <name type="synonym">MTCO1</name>
</gene>
<geneLocation type="mitochondrion"/>
<sequence length="514" mass="57168">MLVNRWLFSTNHKDIGTLYLLFGAWAGMMGMAMSLLIRAELGQPGNLLGNDHIYNVIVTAHAFVMIFFMVMPIMIGGFGNWLVPLMIGAPDMAFPRLNNMSFWLLPPSFLLLLASAAVEAGAGTGWTVYPPLAGNFSHPGASVDLTIFSLHLAGISSILGAINFITTIINMKPPAISQYQTPLFVWSVMITAVLLLLSLPVLAAGITMLLTDRNLNTTFFDPAGGGDPILYQHLFWFFGHPEVYILILPGFGMISHLVTYYSGKKEPFGYMGMVWAMMSIGFLGFIVWAHHMFTVGMDVDTRAYFTSATMIIAIPTGVKVFSWLATLHGRNIKWSPAMLWALGFIFLFTVGGLTGIVLANSSLDIVLHDTYYVVAHFHYVLSMGAVFAIMGGFIHWFPLFSGYTLNQVCAKAHFMIMFVGVNLTFFPQHFLGLSGMPRRYSDYPDAYTMWNIVSSTGSFISLVAMLLMVYMIWEAFASKRKILLIEQPTSNLEWLHGSPPPYHTFDEPVFIKIK</sequence>
<dbReference type="EC" id="7.1.1.9"/>
<dbReference type="EMBL" id="AB016731">
    <property type="protein sequence ID" value="BAA74720.1"/>
    <property type="molecule type" value="Genomic_DNA"/>
</dbReference>
<dbReference type="SMR" id="O99041"/>
<dbReference type="UniPathway" id="UPA00705"/>
<dbReference type="GO" id="GO:0005743">
    <property type="term" value="C:mitochondrial inner membrane"/>
    <property type="evidence" value="ECO:0007669"/>
    <property type="project" value="UniProtKB-SubCell"/>
</dbReference>
<dbReference type="GO" id="GO:0045277">
    <property type="term" value="C:respiratory chain complex IV"/>
    <property type="evidence" value="ECO:0000250"/>
    <property type="project" value="UniProtKB"/>
</dbReference>
<dbReference type="GO" id="GO:0004129">
    <property type="term" value="F:cytochrome-c oxidase activity"/>
    <property type="evidence" value="ECO:0007669"/>
    <property type="project" value="UniProtKB-EC"/>
</dbReference>
<dbReference type="GO" id="GO:0020037">
    <property type="term" value="F:heme binding"/>
    <property type="evidence" value="ECO:0007669"/>
    <property type="project" value="InterPro"/>
</dbReference>
<dbReference type="GO" id="GO:0046872">
    <property type="term" value="F:metal ion binding"/>
    <property type="evidence" value="ECO:0007669"/>
    <property type="project" value="UniProtKB-KW"/>
</dbReference>
<dbReference type="GO" id="GO:0015990">
    <property type="term" value="P:electron transport coupled proton transport"/>
    <property type="evidence" value="ECO:0007669"/>
    <property type="project" value="TreeGrafter"/>
</dbReference>
<dbReference type="GO" id="GO:0006123">
    <property type="term" value="P:mitochondrial electron transport, cytochrome c to oxygen"/>
    <property type="evidence" value="ECO:0007669"/>
    <property type="project" value="TreeGrafter"/>
</dbReference>
<dbReference type="CDD" id="cd01663">
    <property type="entry name" value="Cyt_c_Oxidase_I"/>
    <property type="match status" value="1"/>
</dbReference>
<dbReference type="FunFam" id="1.20.210.10:FF:000001">
    <property type="entry name" value="Cytochrome c oxidase subunit 1"/>
    <property type="match status" value="1"/>
</dbReference>
<dbReference type="Gene3D" id="1.20.210.10">
    <property type="entry name" value="Cytochrome c oxidase-like, subunit I domain"/>
    <property type="match status" value="1"/>
</dbReference>
<dbReference type="InterPro" id="IPR023616">
    <property type="entry name" value="Cyt_c_oxase-like_su1_dom"/>
</dbReference>
<dbReference type="InterPro" id="IPR036927">
    <property type="entry name" value="Cyt_c_oxase-like_su1_sf"/>
</dbReference>
<dbReference type="InterPro" id="IPR000883">
    <property type="entry name" value="Cyt_C_Oxase_1"/>
</dbReference>
<dbReference type="InterPro" id="IPR023615">
    <property type="entry name" value="Cyt_c_Oxase_su1_BS"/>
</dbReference>
<dbReference type="InterPro" id="IPR033944">
    <property type="entry name" value="Cyt_c_oxase_su1_dom"/>
</dbReference>
<dbReference type="PANTHER" id="PTHR10422">
    <property type="entry name" value="CYTOCHROME C OXIDASE SUBUNIT 1"/>
    <property type="match status" value="1"/>
</dbReference>
<dbReference type="PANTHER" id="PTHR10422:SF18">
    <property type="entry name" value="CYTOCHROME C OXIDASE SUBUNIT 1"/>
    <property type="match status" value="1"/>
</dbReference>
<dbReference type="Pfam" id="PF00115">
    <property type="entry name" value="COX1"/>
    <property type="match status" value="1"/>
</dbReference>
<dbReference type="PRINTS" id="PR01165">
    <property type="entry name" value="CYCOXIDASEI"/>
</dbReference>
<dbReference type="SUPFAM" id="SSF81442">
    <property type="entry name" value="Cytochrome c oxidase subunit I-like"/>
    <property type="match status" value="1"/>
</dbReference>
<dbReference type="PROSITE" id="PS50855">
    <property type="entry name" value="COX1"/>
    <property type="match status" value="1"/>
</dbReference>
<dbReference type="PROSITE" id="PS00077">
    <property type="entry name" value="COX1_CUB"/>
    <property type="match status" value="1"/>
</dbReference>
<reference key="1">
    <citation type="journal article" date="2000" name="J. Mol. Evol.">
        <title>Evolutionary rate acceleration of cytochrome c oxidase subunit I in simian primates.</title>
        <authorList>
            <person name="Andrews T.D."/>
            <person name="Easteal S."/>
        </authorList>
    </citation>
    <scope>NUCLEOTIDE SEQUENCE [GENOMIC DNA]</scope>
</reference>